<evidence type="ECO:0000255" key="1">
    <source>
        <dbReference type="HAMAP-Rule" id="MF_00444"/>
    </source>
</evidence>
<keyword id="KW-0963">Cytoplasm</keyword>
<keyword id="KW-0378">Hydrolase</keyword>
<keyword id="KW-0645">Protease</keyword>
<keyword id="KW-0720">Serine protease</keyword>
<name>CLPP2_CHESB</name>
<dbReference type="EC" id="3.4.21.92" evidence="1"/>
<dbReference type="EMBL" id="CP000390">
    <property type="protein sequence ID" value="ABG62927.1"/>
    <property type="molecule type" value="Genomic_DNA"/>
</dbReference>
<dbReference type="SMR" id="Q11I48"/>
<dbReference type="STRING" id="266779.Meso_1531"/>
<dbReference type="MEROPS" id="S14.001"/>
<dbReference type="KEGG" id="mes:Meso_1531"/>
<dbReference type="eggNOG" id="COG0740">
    <property type="taxonomic scope" value="Bacteria"/>
</dbReference>
<dbReference type="HOGENOM" id="CLU_058707_3_2_5"/>
<dbReference type="OrthoDB" id="9802800at2"/>
<dbReference type="GO" id="GO:0005737">
    <property type="term" value="C:cytoplasm"/>
    <property type="evidence" value="ECO:0007669"/>
    <property type="project" value="UniProtKB-SubCell"/>
</dbReference>
<dbReference type="GO" id="GO:0009368">
    <property type="term" value="C:endopeptidase Clp complex"/>
    <property type="evidence" value="ECO:0007669"/>
    <property type="project" value="TreeGrafter"/>
</dbReference>
<dbReference type="GO" id="GO:0004176">
    <property type="term" value="F:ATP-dependent peptidase activity"/>
    <property type="evidence" value="ECO:0007669"/>
    <property type="project" value="InterPro"/>
</dbReference>
<dbReference type="GO" id="GO:0051117">
    <property type="term" value="F:ATPase binding"/>
    <property type="evidence" value="ECO:0007669"/>
    <property type="project" value="TreeGrafter"/>
</dbReference>
<dbReference type="GO" id="GO:0004252">
    <property type="term" value="F:serine-type endopeptidase activity"/>
    <property type="evidence" value="ECO:0007669"/>
    <property type="project" value="UniProtKB-UniRule"/>
</dbReference>
<dbReference type="GO" id="GO:0006515">
    <property type="term" value="P:protein quality control for misfolded or incompletely synthesized proteins"/>
    <property type="evidence" value="ECO:0007669"/>
    <property type="project" value="TreeGrafter"/>
</dbReference>
<dbReference type="CDD" id="cd07017">
    <property type="entry name" value="S14_ClpP_2"/>
    <property type="match status" value="1"/>
</dbReference>
<dbReference type="FunFam" id="3.90.226.10:FF:000001">
    <property type="entry name" value="ATP-dependent Clp protease proteolytic subunit"/>
    <property type="match status" value="1"/>
</dbReference>
<dbReference type="Gene3D" id="3.90.226.10">
    <property type="entry name" value="2-enoyl-CoA Hydratase, Chain A, domain 1"/>
    <property type="match status" value="1"/>
</dbReference>
<dbReference type="HAMAP" id="MF_00444">
    <property type="entry name" value="ClpP"/>
    <property type="match status" value="1"/>
</dbReference>
<dbReference type="InterPro" id="IPR001907">
    <property type="entry name" value="ClpP"/>
</dbReference>
<dbReference type="InterPro" id="IPR029045">
    <property type="entry name" value="ClpP/crotonase-like_dom_sf"/>
</dbReference>
<dbReference type="InterPro" id="IPR023562">
    <property type="entry name" value="ClpP/TepA"/>
</dbReference>
<dbReference type="InterPro" id="IPR018215">
    <property type="entry name" value="ClpP_Ser_AS"/>
</dbReference>
<dbReference type="NCBIfam" id="NF001368">
    <property type="entry name" value="PRK00277.1"/>
    <property type="match status" value="1"/>
</dbReference>
<dbReference type="NCBIfam" id="NF009205">
    <property type="entry name" value="PRK12553.1"/>
    <property type="match status" value="1"/>
</dbReference>
<dbReference type="PANTHER" id="PTHR10381">
    <property type="entry name" value="ATP-DEPENDENT CLP PROTEASE PROTEOLYTIC SUBUNIT"/>
    <property type="match status" value="1"/>
</dbReference>
<dbReference type="PANTHER" id="PTHR10381:SF70">
    <property type="entry name" value="ATP-DEPENDENT CLP PROTEASE PROTEOLYTIC SUBUNIT"/>
    <property type="match status" value="1"/>
</dbReference>
<dbReference type="Pfam" id="PF00574">
    <property type="entry name" value="CLP_protease"/>
    <property type="match status" value="1"/>
</dbReference>
<dbReference type="PRINTS" id="PR00127">
    <property type="entry name" value="CLPPROTEASEP"/>
</dbReference>
<dbReference type="SUPFAM" id="SSF52096">
    <property type="entry name" value="ClpP/crotonase"/>
    <property type="match status" value="1"/>
</dbReference>
<dbReference type="PROSITE" id="PS00381">
    <property type="entry name" value="CLP_PROTEASE_SER"/>
    <property type="match status" value="1"/>
</dbReference>
<gene>
    <name evidence="1" type="primary">clpP2</name>
    <name type="ordered locus">Meso_1531</name>
</gene>
<proteinExistence type="inferred from homology"/>
<reference key="1">
    <citation type="submission" date="2006-06" db="EMBL/GenBank/DDBJ databases">
        <title>Complete sequence of chromosome of Mesorhizobium sp. BNC1.</title>
        <authorList>
            <consortium name="US DOE Joint Genome Institute"/>
            <person name="Copeland A."/>
            <person name="Lucas S."/>
            <person name="Lapidus A."/>
            <person name="Barry K."/>
            <person name="Detter J.C."/>
            <person name="Glavina del Rio T."/>
            <person name="Hammon N."/>
            <person name="Israni S."/>
            <person name="Dalin E."/>
            <person name="Tice H."/>
            <person name="Pitluck S."/>
            <person name="Chertkov O."/>
            <person name="Brettin T."/>
            <person name="Bruce D."/>
            <person name="Han C."/>
            <person name="Tapia R."/>
            <person name="Gilna P."/>
            <person name="Schmutz J."/>
            <person name="Larimer F."/>
            <person name="Land M."/>
            <person name="Hauser L."/>
            <person name="Kyrpides N."/>
            <person name="Mikhailova N."/>
            <person name="Richardson P."/>
        </authorList>
    </citation>
    <scope>NUCLEOTIDE SEQUENCE [LARGE SCALE GENOMIC DNA]</scope>
    <source>
        <strain>BNC1</strain>
    </source>
</reference>
<protein>
    <recommendedName>
        <fullName evidence="1">ATP-dependent Clp protease proteolytic subunit 2</fullName>
        <ecNumber evidence="1">3.4.21.92</ecNumber>
    </recommendedName>
    <alternativeName>
        <fullName evidence="1">Endopeptidase Clp 2</fullName>
    </alternativeName>
</protein>
<accession>Q11I48</accession>
<sequence>MRDTMNLIPMVVEQSARGERSFDIFSRLLRERIIFLNGQVDDNSAALVCAQMLHLEAENPKKEIAFYINSPGGVVSSGFAIYDTMQFIKCPVATLCLGTAASMGSFLLMAGERGMRVALPNASIILHQPLGGFQGQASDIERHAQNVMRHKRRMIRLYAEHCGRAEEDVERTLDRDFFMTAEDAREWGLVDHVYRRRAGDLPLIAPSS</sequence>
<organism>
    <name type="scientific">Chelativorans sp. (strain BNC1)</name>
    <dbReference type="NCBI Taxonomy" id="266779"/>
    <lineage>
        <taxon>Bacteria</taxon>
        <taxon>Pseudomonadati</taxon>
        <taxon>Pseudomonadota</taxon>
        <taxon>Alphaproteobacteria</taxon>
        <taxon>Hyphomicrobiales</taxon>
        <taxon>Phyllobacteriaceae</taxon>
        <taxon>Chelativorans</taxon>
    </lineage>
</organism>
<comment type="function">
    <text evidence="1">Cleaves peptides in various proteins in a process that requires ATP hydrolysis. Has a chymotrypsin-like activity. Plays a major role in the degradation of misfolded proteins.</text>
</comment>
<comment type="catalytic activity">
    <reaction evidence="1">
        <text>Hydrolysis of proteins to small peptides in the presence of ATP and magnesium. alpha-casein is the usual test substrate. In the absence of ATP, only oligopeptides shorter than five residues are hydrolyzed (such as succinyl-Leu-Tyr-|-NHMec, and Leu-Tyr-Leu-|-Tyr-Trp, in which cleavage of the -Tyr-|-Leu- and -Tyr-|-Trp bonds also occurs).</text>
        <dbReference type="EC" id="3.4.21.92"/>
    </reaction>
</comment>
<comment type="subunit">
    <text evidence="1">Fourteen ClpP subunits assemble into 2 heptameric rings which stack back to back to give a disk-like structure with a central cavity, resembling the structure of eukaryotic proteasomes.</text>
</comment>
<comment type="subcellular location">
    <subcellularLocation>
        <location evidence="1">Cytoplasm</location>
    </subcellularLocation>
</comment>
<comment type="similarity">
    <text evidence="1">Belongs to the peptidase S14 family.</text>
</comment>
<feature type="chain" id="PRO_0000252826" description="ATP-dependent Clp protease proteolytic subunit 2">
    <location>
        <begin position="1"/>
        <end position="208"/>
    </location>
</feature>
<feature type="active site" description="Nucleophile" evidence="1">
    <location>
        <position position="102"/>
    </location>
</feature>
<feature type="active site" evidence="1">
    <location>
        <position position="127"/>
    </location>
</feature>